<sequence>MSSVSPIQIPSRLPLLLTHEGVLLPGSTMRTSVDSARNLQLVRSRLLKGTSLQSTILGVIPNTPDPASDAQDLPPLHRIGTAALAVQVVGSNWPKPHYTLLITGLCRFQIVQVLKEKPYPIAEVEQLDRLEEFPSTCKMREELGELSEQFYKYAVQLVEMLDMSVPAVAKLRRLLDSLPREALPDILTSIIRTSNKEKLQILDAVSLEERFKMTIPLLVRQIEGLKLLQKTRKPKQDDDKRVIAIRPIRRITHISGTLEDEDEDEDNDDIVMLEKEIRTSSMPEQAHKVCVKEIKRLKKMPQSMPEYALTRNYLELMVELPWNKSTTDRLDIRAARILLDNDHYAMEKLKKRVLEYLVVRQLKNNLKGPILCFVGPPGVGKTSVGRLVAKTLGREFHRIALGGVCDQSDIRGHRRTYVGSMPGRIINGLKTVGVNNPVFLLDEVDKLGKSLQGDPAAALLEVLDPEQNHNFTDHYLNVAFDLSRVLFIATANTTATIPAALLDRMEIIQVPGYTQEEKIEIAHRHLIPKQLEQHGLTPQQIQIPQVTTLDIITRYTREAGVRSLDRKLGAICRAVAVKVAEGQHKEAKLDRSDVTEREGCREHILEDEKPESISDTTDLALPPEMPILIDFHALKDILGPPMYEMEVSQRLSQPGVAIGLAWTPLGGEIMFVEASRMDGEGQLTLTGQLGDVMKESAHLAISWLRSNAKKYQLTNAFGSFDLLDNTDIHLHFPAGAVTKDGPSAGVTIVTCLASLFSERLVRSDVAMTGEITLRGLVLPVGGIKDKVLAAHRAGLKQVIIPRRNEKDLEGIPGNVRQDLSFVTASCLDEVLNAAFDGGFTVKTRPGLLNSKL</sequence>
<name>LONP2_PONAB</name>
<organism>
    <name type="scientific">Pongo abelii</name>
    <name type="common">Sumatran orangutan</name>
    <name type="synonym">Pongo pygmaeus abelii</name>
    <dbReference type="NCBI Taxonomy" id="9601"/>
    <lineage>
        <taxon>Eukaryota</taxon>
        <taxon>Metazoa</taxon>
        <taxon>Chordata</taxon>
        <taxon>Craniata</taxon>
        <taxon>Vertebrata</taxon>
        <taxon>Euteleostomi</taxon>
        <taxon>Mammalia</taxon>
        <taxon>Eutheria</taxon>
        <taxon>Euarchontoglires</taxon>
        <taxon>Primates</taxon>
        <taxon>Haplorrhini</taxon>
        <taxon>Catarrhini</taxon>
        <taxon>Hominidae</taxon>
        <taxon>Pongo</taxon>
    </lineage>
</organism>
<keyword id="KW-0007">Acetylation</keyword>
<keyword id="KW-0067">ATP-binding</keyword>
<keyword id="KW-0378">Hydrolase</keyword>
<keyword id="KW-0547">Nucleotide-binding</keyword>
<keyword id="KW-0576">Peroxisome</keyword>
<keyword id="KW-0645">Protease</keyword>
<keyword id="KW-1185">Reference proteome</keyword>
<keyword id="KW-0720">Serine protease</keyword>
<accession>Q5R6M5</accession>
<feature type="initiator methionine" description="Removed" evidence="1">
    <location>
        <position position="1"/>
    </location>
</feature>
<feature type="chain" id="PRO_0000287643" description="Lon protease homolog 2, peroxisomal">
    <location>
        <begin position="2"/>
        <end position="852"/>
    </location>
</feature>
<feature type="domain" description="Lon N-terminal" evidence="4">
    <location>
        <begin position="13"/>
        <end position="222"/>
    </location>
</feature>
<feature type="domain" description="Lon proteolytic" evidence="3">
    <location>
        <begin position="651"/>
        <end position="837"/>
    </location>
</feature>
<feature type="short sequence motif" description="Microbody targeting signal" evidence="2">
    <location>
        <begin position="850"/>
        <end position="852"/>
    </location>
</feature>
<feature type="active site" evidence="2">
    <location>
        <position position="743"/>
    </location>
</feature>
<feature type="active site" evidence="2">
    <location>
        <position position="786"/>
    </location>
</feature>
<feature type="binding site" evidence="2">
    <location>
        <begin position="375"/>
        <end position="382"/>
    </location>
    <ligand>
        <name>ATP</name>
        <dbReference type="ChEBI" id="CHEBI:30616"/>
    </ligand>
</feature>
<feature type="modified residue" description="N-acetylserine" evidence="1">
    <location>
        <position position="2"/>
    </location>
</feature>
<proteinExistence type="evidence at transcript level"/>
<evidence type="ECO:0000250" key="1">
    <source>
        <dbReference type="UniProtKB" id="Q86WA8"/>
    </source>
</evidence>
<evidence type="ECO:0000255" key="2">
    <source>
        <dbReference type="HAMAP-Rule" id="MF_03121"/>
    </source>
</evidence>
<evidence type="ECO:0000255" key="3">
    <source>
        <dbReference type="PROSITE-ProRule" id="PRU01122"/>
    </source>
</evidence>
<evidence type="ECO:0000255" key="4">
    <source>
        <dbReference type="PROSITE-ProRule" id="PRU01123"/>
    </source>
</evidence>
<reference key="1">
    <citation type="submission" date="2004-11" db="EMBL/GenBank/DDBJ databases">
        <authorList>
            <consortium name="The German cDNA consortium"/>
        </authorList>
    </citation>
    <scope>NUCLEOTIDE SEQUENCE [LARGE SCALE MRNA]</scope>
    <source>
        <tissue>Brain cortex</tissue>
    </source>
</reference>
<dbReference type="EC" id="3.4.21.53" evidence="2"/>
<dbReference type="EMBL" id="CR860463">
    <property type="protein sequence ID" value="CAH92585.1"/>
    <property type="molecule type" value="mRNA"/>
</dbReference>
<dbReference type="RefSeq" id="NP_001126515.1">
    <property type="nucleotide sequence ID" value="NM_001133043.2"/>
</dbReference>
<dbReference type="SMR" id="Q5R6M5"/>
<dbReference type="STRING" id="9601.ENSPPYP00000008277"/>
<dbReference type="GeneID" id="100173503"/>
<dbReference type="KEGG" id="pon:100173503"/>
<dbReference type="CTD" id="83752"/>
<dbReference type="eggNOG" id="KOG2004">
    <property type="taxonomic scope" value="Eukaryota"/>
</dbReference>
<dbReference type="InParanoid" id="Q5R6M5"/>
<dbReference type="OrthoDB" id="2411602at2759"/>
<dbReference type="Proteomes" id="UP000001595">
    <property type="component" value="Unplaced"/>
</dbReference>
<dbReference type="GO" id="GO:0005782">
    <property type="term" value="C:peroxisomal matrix"/>
    <property type="evidence" value="ECO:0007669"/>
    <property type="project" value="UniProtKB-SubCell"/>
</dbReference>
<dbReference type="GO" id="GO:0005524">
    <property type="term" value="F:ATP binding"/>
    <property type="evidence" value="ECO:0007669"/>
    <property type="project" value="UniProtKB-UniRule"/>
</dbReference>
<dbReference type="GO" id="GO:0016887">
    <property type="term" value="F:ATP hydrolysis activity"/>
    <property type="evidence" value="ECO:0007669"/>
    <property type="project" value="UniProtKB-UniRule"/>
</dbReference>
<dbReference type="GO" id="GO:0004176">
    <property type="term" value="F:ATP-dependent peptidase activity"/>
    <property type="evidence" value="ECO:0007669"/>
    <property type="project" value="UniProtKB-UniRule"/>
</dbReference>
<dbReference type="GO" id="GO:0004252">
    <property type="term" value="F:serine-type endopeptidase activity"/>
    <property type="evidence" value="ECO:0007669"/>
    <property type="project" value="UniProtKB-UniRule"/>
</dbReference>
<dbReference type="GO" id="GO:0016558">
    <property type="term" value="P:protein import into peroxisome matrix"/>
    <property type="evidence" value="ECO:0007669"/>
    <property type="project" value="UniProtKB-UniRule"/>
</dbReference>
<dbReference type="GO" id="GO:0016485">
    <property type="term" value="P:protein processing"/>
    <property type="evidence" value="ECO:0007669"/>
    <property type="project" value="UniProtKB-UniRule"/>
</dbReference>
<dbReference type="GO" id="GO:0006515">
    <property type="term" value="P:protein quality control for misfolded or incompletely synthesized proteins"/>
    <property type="evidence" value="ECO:0007669"/>
    <property type="project" value="UniProtKB-UniRule"/>
</dbReference>
<dbReference type="CDD" id="cd19500">
    <property type="entry name" value="RecA-like_Lon"/>
    <property type="match status" value="1"/>
</dbReference>
<dbReference type="FunFam" id="1.10.8.60:FF:000046">
    <property type="entry name" value="Lon protease homolog 2, peroxisomal"/>
    <property type="match status" value="1"/>
</dbReference>
<dbReference type="FunFam" id="1.20.5.5270:FF:000003">
    <property type="entry name" value="Lon protease homolog 2, peroxisomal"/>
    <property type="match status" value="1"/>
</dbReference>
<dbReference type="FunFam" id="2.30.130.40:FF:000003">
    <property type="entry name" value="Lon protease homolog 2, peroxisomal"/>
    <property type="match status" value="1"/>
</dbReference>
<dbReference type="FunFam" id="3.30.230.10:FF:000019">
    <property type="entry name" value="Lon protease homolog 2, peroxisomal"/>
    <property type="match status" value="1"/>
</dbReference>
<dbReference type="FunFam" id="3.40.50.300:FF:000382">
    <property type="entry name" value="Lon protease homolog 2, peroxisomal"/>
    <property type="match status" value="1"/>
</dbReference>
<dbReference type="Gene3D" id="1.10.8.60">
    <property type="match status" value="1"/>
</dbReference>
<dbReference type="Gene3D" id="1.20.5.5270">
    <property type="match status" value="1"/>
</dbReference>
<dbReference type="Gene3D" id="3.30.230.10">
    <property type="match status" value="1"/>
</dbReference>
<dbReference type="Gene3D" id="2.30.130.40">
    <property type="entry name" value="LON domain-like"/>
    <property type="match status" value="1"/>
</dbReference>
<dbReference type="Gene3D" id="3.40.50.300">
    <property type="entry name" value="P-loop containing nucleotide triphosphate hydrolases"/>
    <property type="match status" value="1"/>
</dbReference>
<dbReference type="HAMAP" id="MF_03121">
    <property type="entry name" value="lonp2_euk"/>
    <property type="match status" value="1"/>
</dbReference>
<dbReference type="InterPro" id="IPR003593">
    <property type="entry name" value="AAA+_ATPase"/>
</dbReference>
<dbReference type="InterPro" id="IPR003959">
    <property type="entry name" value="ATPase_AAA_core"/>
</dbReference>
<dbReference type="InterPro" id="IPR004815">
    <property type="entry name" value="Lon_bac/euk-typ"/>
</dbReference>
<dbReference type="InterPro" id="IPR054594">
    <property type="entry name" value="Lon_lid"/>
</dbReference>
<dbReference type="InterPro" id="IPR008269">
    <property type="entry name" value="Lon_proteolytic"/>
</dbReference>
<dbReference type="InterPro" id="IPR027065">
    <property type="entry name" value="Lon_Prtase"/>
</dbReference>
<dbReference type="InterPro" id="IPR003111">
    <property type="entry name" value="Lon_prtase_N"/>
</dbReference>
<dbReference type="InterPro" id="IPR046336">
    <property type="entry name" value="Lon_prtase_N_sf"/>
</dbReference>
<dbReference type="InterPro" id="IPR027501">
    <property type="entry name" value="Lonp2_euk"/>
</dbReference>
<dbReference type="InterPro" id="IPR027417">
    <property type="entry name" value="P-loop_NTPase"/>
</dbReference>
<dbReference type="InterPro" id="IPR008268">
    <property type="entry name" value="Peptidase_S16_AS"/>
</dbReference>
<dbReference type="InterPro" id="IPR015947">
    <property type="entry name" value="PUA-like_sf"/>
</dbReference>
<dbReference type="InterPro" id="IPR020568">
    <property type="entry name" value="Ribosomal_Su5_D2-typ_SF"/>
</dbReference>
<dbReference type="InterPro" id="IPR014721">
    <property type="entry name" value="Ribsml_uS5_D2-typ_fold_subgr"/>
</dbReference>
<dbReference type="NCBIfam" id="TIGR00763">
    <property type="entry name" value="lon"/>
    <property type="match status" value="1"/>
</dbReference>
<dbReference type="PANTHER" id="PTHR10046">
    <property type="entry name" value="ATP DEPENDENT LON PROTEASE FAMILY MEMBER"/>
    <property type="match status" value="1"/>
</dbReference>
<dbReference type="Pfam" id="PF00004">
    <property type="entry name" value="AAA"/>
    <property type="match status" value="1"/>
</dbReference>
<dbReference type="Pfam" id="PF05362">
    <property type="entry name" value="Lon_C"/>
    <property type="match status" value="1"/>
</dbReference>
<dbReference type="Pfam" id="PF22667">
    <property type="entry name" value="Lon_lid"/>
    <property type="match status" value="1"/>
</dbReference>
<dbReference type="Pfam" id="PF02190">
    <property type="entry name" value="LON_substr_bdg"/>
    <property type="match status" value="1"/>
</dbReference>
<dbReference type="PIRSF" id="PIRSF001174">
    <property type="entry name" value="Lon_proteas"/>
    <property type="match status" value="1"/>
</dbReference>
<dbReference type="PRINTS" id="PR00830">
    <property type="entry name" value="ENDOLAPTASE"/>
</dbReference>
<dbReference type="SMART" id="SM00382">
    <property type="entry name" value="AAA"/>
    <property type="match status" value="1"/>
</dbReference>
<dbReference type="SMART" id="SM00464">
    <property type="entry name" value="LON"/>
    <property type="match status" value="1"/>
</dbReference>
<dbReference type="SUPFAM" id="SSF52540">
    <property type="entry name" value="P-loop containing nucleoside triphosphate hydrolases"/>
    <property type="match status" value="1"/>
</dbReference>
<dbReference type="SUPFAM" id="SSF88697">
    <property type="entry name" value="PUA domain-like"/>
    <property type="match status" value="1"/>
</dbReference>
<dbReference type="SUPFAM" id="SSF54211">
    <property type="entry name" value="Ribosomal protein S5 domain 2-like"/>
    <property type="match status" value="1"/>
</dbReference>
<dbReference type="PROSITE" id="PS51787">
    <property type="entry name" value="LON_N"/>
    <property type="match status" value="1"/>
</dbReference>
<dbReference type="PROSITE" id="PS51786">
    <property type="entry name" value="LON_PROTEOLYTIC"/>
    <property type="match status" value="1"/>
</dbReference>
<dbReference type="PROSITE" id="PS01046">
    <property type="entry name" value="LON_SER"/>
    <property type="match status" value="1"/>
</dbReference>
<gene>
    <name evidence="2" type="primary">LONP2</name>
</gene>
<protein>
    <recommendedName>
        <fullName evidence="2">Lon protease homolog 2, peroxisomal</fullName>
        <ecNumber evidence="2">3.4.21.53</ecNumber>
    </recommendedName>
    <alternativeName>
        <fullName evidence="2">Lon protease-like protein 2</fullName>
        <shortName evidence="2">Lon protease 2</shortName>
    </alternativeName>
    <alternativeName>
        <fullName evidence="2">Peroxisomal Lon protease</fullName>
    </alternativeName>
</protein>
<comment type="function">
    <text evidence="2">ATP-dependent serine protease that mediates the selective degradation of misfolded and unassembled polypeptides in the peroxisomal matrix. Necessary for type 2 peroxisome targeting signal (PTS2)-containing protein processing and facilitates peroxisome matrix protein import. May indirectly regulate peroxisomal fatty acid beta-oxidation through degradation of the self-processed forms of TYSND1.</text>
</comment>
<comment type="catalytic activity">
    <reaction evidence="2">
        <text>Hydrolysis of proteins in presence of ATP.</text>
        <dbReference type="EC" id="3.4.21.53"/>
    </reaction>
</comment>
<comment type="subunit">
    <text evidence="1 2">Interacts with PEX5. Interacts with TYSND1 (By similarity). May interact with enzymes involved in beta-oxidation of fatty acids, including ACOX1/AOX (By similarity).</text>
</comment>
<comment type="subcellular location">
    <subcellularLocation>
        <location evidence="1 2">Peroxisome matrix</location>
    </subcellularLocation>
</comment>
<comment type="similarity">
    <text evidence="2">Belongs to the peptidase S16 family.</text>
</comment>